<sequence length="127" mass="14604">MVEVEHWNTLRLRIYIGENDRWEGKPLYKAIVEKLREMGIAGATVYRGIYGFGKKSRIHSSDVLRLSTDLPIVIEVVDRGHNIEKAVNVIKPMIKDGMITVEPTIVLWVGSKEEIKKFEEDAIAERR</sequence>
<name>Y666_PYRAB</name>
<organism>
    <name type="scientific">Pyrococcus abyssi (strain GE5 / Orsay)</name>
    <dbReference type="NCBI Taxonomy" id="272844"/>
    <lineage>
        <taxon>Archaea</taxon>
        <taxon>Methanobacteriati</taxon>
        <taxon>Methanobacteriota</taxon>
        <taxon>Thermococci</taxon>
        <taxon>Thermococcales</taxon>
        <taxon>Thermococcaceae</taxon>
        <taxon>Pyrococcus</taxon>
    </lineage>
</organism>
<reference key="1">
    <citation type="journal article" date="2003" name="Mol. Microbiol.">
        <title>An integrated analysis of the genome of the hyperthermophilic archaeon Pyrococcus abyssi.</title>
        <authorList>
            <person name="Cohen G.N."/>
            <person name="Barbe V."/>
            <person name="Flament D."/>
            <person name="Galperin M."/>
            <person name="Heilig R."/>
            <person name="Lecompte O."/>
            <person name="Poch O."/>
            <person name="Prieur D."/>
            <person name="Querellou J."/>
            <person name="Ripp R."/>
            <person name="Thierry J.-C."/>
            <person name="Van der Oost J."/>
            <person name="Weissenbach J."/>
            <person name="Zivanovic Y."/>
            <person name="Forterre P."/>
        </authorList>
    </citation>
    <scope>NUCLEOTIDE SEQUENCE [LARGE SCALE GENOMIC DNA]</scope>
    <source>
        <strain>GE5 / Orsay</strain>
    </source>
</reference>
<reference key="2">
    <citation type="journal article" date="2012" name="Curr. Microbiol.">
        <title>Re-annotation of two hyperthermophilic archaea Pyrococcus abyssi GE5 and Pyrococcus furiosus DSM 3638.</title>
        <authorList>
            <person name="Gao J."/>
            <person name="Wang J."/>
        </authorList>
    </citation>
    <scope>GENOME REANNOTATION</scope>
    <source>
        <strain>GE5 / Orsay</strain>
    </source>
</reference>
<comment type="similarity">
    <text evidence="1">Belongs to the UPF0166 family.</text>
</comment>
<dbReference type="EMBL" id="AJ248285">
    <property type="protein sequence ID" value="CAB49579.1"/>
    <property type="molecule type" value="Genomic_DNA"/>
</dbReference>
<dbReference type="EMBL" id="HE613800">
    <property type="protein sequence ID" value="CCE70051.1"/>
    <property type="molecule type" value="Genomic_DNA"/>
</dbReference>
<dbReference type="PIR" id="B75108">
    <property type="entry name" value="B75108"/>
</dbReference>
<dbReference type="RefSeq" id="WP_010867781.1">
    <property type="nucleotide sequence ID" value="NC_000868.1"/>
</dbReference>
<dbReference type="SMR" id="Q9V0X3"/>
<dbReference type="STRING" id="272844.PAB1926"/>
<dbReference type="KEGG" id="pab:PAB1926"/>
<dbReference type="PATRIC" id="fig|272844.11.peg.696"/>
<dbReference type="eggNOG" id="arCOG04967">
    <property type="taxonomic scope" value="Archaea"/>
</dbReference>
<dbReference type="HOGENOM" id="CLU_146749_0_1_2"/>
<dbReference type="OrthoDB" id="8505at2157"/>
<dbReference type="PhylomeDB" id="Q9V0X3"/>
<dbReference type="Proteomes" id="UP000000810">
    <property type="component" value="Chromosome"/>
</dbReference>
<dbReference type="Proteomes" id="UP000009139">
    <property type="component" value="Chromosome"/>
</dbReference>
<dbReference type="Gene3D" id="3.30.70.120">
    <property type="match status" value="1"/>
</dbReference>
<dbReference type="InterPro" id="IPR011322">
    <property type="entry name" value="N-reg_PII-like_a/b"/>
</dbReference>
<dbReference type="InterPro" id="IPR015867">
    <property type="entry name" value="N-reg_PII/ATP_PRibTrfase_C"/>
</dbReference>
<dbReference type="InterPro" id="IPR003793">
    <property type="entry name" value="UPF0166"/>
</dbReference>
<dbReference type="PANTHER" id="PTHR35983">
    <property type="entry name" value="UPF0166 PROTEIN TM_0021"/>
    <property type="match status" value="1"/>
</dbReference>
<dbReference type="PANTHER" id="PTHR35983:SF1">
    <property type="entry name" value="UPF0166 PROTEIN TM_0021"/>
    <property type="match status" value="1"/>
</dbReference>
<dbReference type="Pfam" id="PF02641">
    <property type="entry name" value="DUF190"/>
    <property type="match status" value="1"/>
</dbReference>
<dbReference type="SUPFAM" id="SSF54913">
    <property type="entry name" value="GlnB-like"/>
    <property type="match status" value="1"/>
</dbReference>
<accession>Q9V0X3</accession>
<accession>G8ZJC4</accession>
<proteinExistence type="inferred from homology"/>
<protein>
    <recommendedName>
        <fullName>UPF0166 protein PYRAB06660</fullName>
    </recommendedName>
</protein>
<gene>
    <name type="ordered locus">PYRAB06660</name>
    <name type="ORF">PAB1926</name>
</gene>
<feature type="chain" id="PRO_0000185234" description="UPF0166 protein PYRAB06660">
    <location>
        <begin position="1"/>
        <end position="127"/>
    </location>
</feature>
<evidence type="ECO:0000305" key="1"/>